<keyword id="KW-1185">Reference proteome</keyword>
<keyword id="KW-0687">Ribonucleoprotein</keyword>
<keyword id="KW-0689">Ribosomal protein</keyword>
<keyword id="KW-0694">RNA-binding</keyword>
<keyword id="KW-0699">rRNA-binding</keyword>
<comment type="function">
    <text evidence="1">Binds the lower part of the 30S subunit head. Binds mRNA in the 70S ribosome, positioning it for translation.</text>
</comment>
<comment type="subunit">
    <text evidence="1">Part of the 30S ribosomal subunit. Forms a tight complex with proteins S10 and S14.</text>
</comment>
<comment type="similarity">
    <text evidence="1">Belongs to the universal ribosomal protein uS3 family.</text>
</comment>
<gene>
    <name evidence="1" type="primary">rpsC</name>
    <name type="ordered locus">MMOB2410</name>
</gene>
<name>RS3_MYCM1</name>
<protein>
    <recommendedName>
        <fullName evidence="1">Small ribosomal subunit protein uS3</fullName>
    </recommendedName>
    <alternativeName>
        <fullName evidence="2">30S ribosomal protein S3</fullName>
    </alternativeName>
</protein>
<organism>
    <name type="scientific">Mycoplasma mobile (strain ATCC 43663 / 163K / NCTC 11711)</name>
    <name type="common">Mesomycoplasma mobile</name>
    <dbReference type="NCBI Taxonomy" id="267748"/>
    <lineage>
        <taxon>Bacteria</taxon>
        <taxon>Bacillati</taxon>
        <taxon>Mycoplasmatota</taxon>
        <taxon>Mycoplasmoidales</taxon>
        <taxon>Metamycoplasmataceae</taxon>
        <taxon>Mesomycoplasma</taxon>
    </lineage>
</organism>
<evidence type="ECO:0000255" key="1">
    <source>
        <dbReference type="HAMAP-Rule" id="MF_01309"/>
    </source>
</evidence>
<evidence type="ECO:0000305" key="2"/>
<feature type="chain" id="PRO_0000130153" description="Small ribosomal subunit protein uS3">
    <location>
        <begin position="1"/>
        <end position="225"/>
    </location>
</feature>
<feature type="domain" description="KH type-2" evidence="1">
    <location>
        <begin position="39"/>
        <end position="109"/>
    </location>
</feature>
<sequence>MGQKVNPNGFRYGVTKKHNTLWYADKKDFADILLQDDKIYRFFNKFTREYLIGKVEIRRNQNGHLSVLVHSAKPGAILGQNGENINKLTQDIQKLLRNKELKLNIEVVNIKNPDLNAIILAEQIAIKLENRAPFRVAQKFAIRNAMKSGAKGIKTQVSGRLNGVDMARSEGYSEGEMKLHTLRQDVDFAMATARTTYGAIGVKVWVSKGEFLDGNGEKNVTTEKN</sequence>
<accession>Q6KI49</accession>
<reference key="1">
    <citation type="journal article" date="2004" name="Genome Res.">
        <title>The complete genome and proteome of Mycoplasma mobile.</title>
        <authorList>
            <person name="Jaffe J.D."/>
            <person name="Stange-Thomann N."/>
            <person name="Smith C."/>
            <person name="DeCaprio D."/>
            <person name="Fisher S."/>
            <person name="Butler J."/>
            <person name="Calvo S."/>
            <person name="Elkins T."/>
            <person name="FitzGerald M.G."/>
            <person name="Hafez N."/>
            <person name="Kodira C.D."/>
            <person name="Major J."/>
            <person name="Wang S."/>
            <person name="Wilkinson J."/>
            <person name="Nicol R."/>
            <person name="Nusbaum C."/>
            <person name="Birren B."/>
            <person name="Berg H.C."/>
            <person name="Church G.M."/>
        </authorList>
    </citation>
    <scope>NUCLEOTIDE SEQUENCE [LARGE SCALE GENOMIC DNA]</scope>
    <source>
        <strain>ATCC 43663 / NCTC 11711 / 163 K</strain>
    </source>
</reference>
<proteinExistence type="inferred from homology"/>
<dbReference type="EMBL" id="AE017308">
    <property type="protein sequence ID" value="AAT27727.1"/>
    <property type="molecule type" value="Genomic_DNA"/>
</dbReference>
<dbReference type="RefSeq" id="WP_011264761.1">
    <property type="nucleotide sequence ID" value="NC_006908.1"/>
</dbReference>
<dbReference type="SMR" id="Q6KI49"/>
<dbReference type="STRING" id="267748.MMOB2410"/>
<dbReference type="KEGG" id="mmo:MMOB2410"/>
<dbReference type="eggNOG" id="COG0092">
    <property type="taxonomic scope" value="Bacteria"/>
</dbReference>
<dbReference type="HOGENOM" id="CLU_058591_0_2_14"/>
<dbReference type="OrthoDB" id="9806396at2"/>
<dbReference type="Proteomes" id="UP000009072">
    <property type="component" value="Chromosome"/>
</dbReference>
<dbReference type="GO" id="GO:0022627">
    <property type="term" value="C:cytosolic small ribosomal subunit"/>
    <property type="evidence" value="ECO:0007669"/>
    <property type="project" value="TreeGrafter"/>
</dbReference>
<dbReference type="GO" id="GO:0003729">
    <property type="term" value="F:mRNA binding"/>
    <property type="evidence" value="ECO:0007669"/>
    <property type="project" value="UniProtKB-UniRule"/>
</dbReference>
<dbReference type="GO" id="GO:0019843">
    <property type="term" value="F:rRNA binding"/>
    <property type="evidence" value="ECO:0007669"/>
    <property type="project" value="UniProtKB-UniRule"/>
</dbReference>
<dbReference type="GO" id="GO:0003735">
    <property type="term" value="F:structural constituent of ribosome"/>
    <property type="evidence" value="ECO:0007669"/>
    <property type="project" value="InterPro"/>
</dbReference>
<dbReference type="GO" id="GO:0006412">
    <property type="term" value="P:translation"/>
    <property type="evidence" value="ECO:0007669"/>
    <property type="project" value="UniProtKB-UniRule"/>
</dbReference>
<dbReference type="CDD" id="cd02412">
    <property type="entry name" value="KH-II_30S_S3"/>
    <property type="match status" value="1"/>
</dbReference>
<dbReference type="FunFam" id="3.30.300.20:FF:000001">
    <property type="entry name" value="30S ribosomal protein S3"/>
    <property type="match status" value="1"/>
</dbReference>
<dbReference type="Gene3D" id="3.30.300.20">
    <property type="match status" value="1"/>
</dbReference>
<dbReference type="Gene3D" id="3.30.1140.32">
    <property type="entry name" value="Ribosomal protein S3, C-terminal domain"/>
    <property type="match status" value="1"/>
</dbReference>
<dbReference type="HAMAP" id="MF_01309_B">
    <property type="entry name" value="Ribosomal_uS3_B"/>
    <property type="match status" value="1"/>
</dbReference>
<dbReference type="InterPro" id="IPR004087">
    <property type="entry name" value="KH_dom"/>
</dbReference>
<dbReference type="InterPro" id="IPR015946">
    <property type="entry name" value="KH_dom-like_a/b"/>
</dbReference>
<dbReference type="InterPro" id="IPR004044">
    <property type="entry name" value="KH_dom_type_2"/>
</dbReference>
<dbReference type="InterPro" id="IPR009019">
    <property type="entry name" value="KH_sf_prok-type"/>
</dbReference>
<dbReference type="InterPro" id="IPR036419">
    <property type="entry name" value="Ribosomal_S3_C_sf"/>
</dbReference>
<dbReference type="InterPro" id="IPR005704">
    <property type="entry name" value="Ribosomal_uS3_bac-typ"/>
</dbReference>
<dbReference type="InterPro" id="IPR001351">
    <property type="entry name" value="Ribosomal_uS3_C"/>
</dbReference>
<dbReference type="InterPro" id="IPR018280">
    <property type="entry name" value="Ribosomal_uS3_CS"/>
</dbReference>
<dbReference type="NCBIfam" id="TIGR01009">
    <property type="entry name" value="rpsC_bact"/>
    <property type="match status" value="1"/>
</dbReference>
<dbReference type="PANTHER" id="PTHR11760">
    <property type="entry name" value="30S/40S RIBOSOMAL PROTEIN S3"/>
    <property type="match status" value="1"/>
</dbReference>
<dbReference type="PANTHER" id="PTHR11760:SF19">
    <property type="entry name" value="SMALL RIBOSOMAL SUBUNIT PROTEIN US3C"/>
    <property type="match status" value="1"/>
</dbReference>
<dbReference type="Pfam" id="PF07650">
    <property type="entry name" value="KH_2"/>
    <property type="match status" value="1"/>
</dbReference>
<dbReference type="Pfam" id="PF00189">
    <property type="entry name" value="Ribosomal_S3_C"/>
    <property type="match status" value="1"/>
</dbReference>
<dbReference type="SMART" id="SM00322">
    <property type="entry name" value="KH"/>
    <property type="match status" value="1"/>
</dbReference>
<dbReference type="SUPFAM" id="SSF54814">
    <property type="entry name" value="Prokaryotic type KH domain (KH-domain type II)"/>
    <property type="match status" value="1"/>
</dbReference>
<dbReference type="SUPFAM" id="SSF54821">
    <property type="entry name" value="Ribosomal protein S3 C-terminal domain"/>
    <property type="match status" value="1"/>
</dbReference>
<dbReference type="PROSITE" id="PS50823">
    <property type="entry name" value="KH_TYPE_2"/>
    <property type="match status" value="1"/>
</dbReference>
<dbReference type="PROSITE" id="PS00548">
    <property type="entry name" value="RIBOSOMAL_S3"/>
    <property type="match status" value="1"/>
</dbReference>